<sequence>MSRYRGPRLRIVRRLGELPGLSRKSPRRAYPPGQHGQARRKRSEYAIRLEEKQKLRLNYGITEKQLVRYVKKARRATGSTGQALLELLEMRLDNTVFRLGMAGTIPGARQLVCHGHITVNGQVVDIPSYQCRPGDIVSVRDRDRSRKLVETNMEFPGLANVPSHLEFDKNTFTGKVNSVIDREWVALQINELLVIEYYSRKA</sequence>
<evidence type="ECO:0000255" key="1">
    <source>
        <dbReference type="HAMAP-Rule" id="MF_01306"/>
    </source>
</evidence>
<evidence type="ECO:0000256" key="2">
    <source>
        <dbReference type="SAM" id="MobiDB-lite"/>
    </source>
</evidence>
<evidence type="ECO:0000305" key="3"/>
<feature type="chain" id="PRO_0000132480" description="Small ribosomal subunit protein uS4">
    <location>
        <begin position="1"/>
        <end position="202"/>
    </location>
</feature>
<feature type="domain" description="S4 RNA-binding" evidence="1">
    <location>
        <begin position="90"/>
        <end position="152"/>
    </location>
</feature>
<feature type="region of interest" description="Disordered" evidence="2">
    <location>
        <begin position="21"/>
        <end position="42"/>
    </location>
</feature>
<reference key="1">
    <citation type="journal article" date="1995" name="DNA Res.">
        <title>Sequence analysis of the genome of the unicellular cyanobacterium Synechocystis sp. strain PCC6803. I. Sequence features in the 1 Mb region from map positions 64% to 92% of the genome.</title>
        <authorList>
            <person name="Kaneko T."/>
            <person name="Tanaka A."/>
            <person name="Sato S."/>
            <person name="Kotani H."/>
            <person name="Sazuka T."/>
            <person name="Miyajima N."/>
            <person name="Sugiura M."/>
            <person name="Tabata S."/>
        </authorList>
    </citation>
    <scope>NUCLEOTIDE SEQUENCE [LARGE SCALE GENOMIC DNA]</scope>
    <source>
        <strain>ATCC 27184 / PCC 6803 / N-1</strain>
    </source>
</reference>
<reference key="2">
    <citation type="journal article" date="1996" name="DNA Res.">
        <title>Sequence analysis of the genome of the unicellular cyanobacterium Synechocystis sp. strain PCC6803. II. Sequence determination of the entire genome and assignment of potential protein-coding regions.</title>
        <authorList>
            <person name="Kaneko T."/>
            <person name="Sato S."/>
            <person name="Kotani H."/>
            <person name="Tanaka A."/>
            <person name="Asamizu E."/>
            <person name="Nakamura Y."/>
            <person name="Miyajima N."/>
            <person name="Hirosawa M."/>
            <person name="Sugiura M."/>
            <person name="Sasamoto S."/>
            <person name="Kimura T."/>
            <person name="Hosouchi T."/>
            <person name="Matsuno A."/>
            <person name="Muraki A."/>
            <person name="Nakazaki N."/>
            <person name="Naruo K."/>
            <person name="Okumura S."/>
            <person name="Shimpo S."/>
            <person name="Takeuchi C."/>
            <person name="Wada T."/>
            <person name="Watanabe A."/>
            <person name="Yamada M."/>
            <person name="Yasuda M."/>
            <person name="Tabata S."/>
        </authorList>
    </citation>
    <scope>NUCLEOTIDE SEQUENCE [LARGE SCALE GENOMIC DNA]</scope>
    <source>
        <strain>ATCC 27184 / PCC 6803 / Kazusa</strain>
    </source>
</reference>
<gene>
    <name evidence="1" type="primary">rpsD</name>
    <name evidence="1" type="synonym">rps4</name>
    <name type="ordered locus">slr0469</name>
</gene>
<organism>
    <name type="scientific">Synechocystis sp. (strain ATCC 27184 / PCC 6803 / Kazusa)</name>
    <dbReference type="NCBI Taxonomy" id="1111708"/>
    <lineage>
        <taxon>Bacteria</taxon>
        <taxon>Bacillati</taxon>
        <taxon>Cyanobacteriota</taxon>
        <taxon>Cyanophyceae</taxon>
        <taxon>Synechococcales</taxon>
        <taxon>Merismopediaceae</taxon>
        <taxon>Synechocystis</taxon>
    </lineage>
</organism>
<keyword id="KW-1185">Reference proteome</keyword>
<keyword id="KW-0687">Ribonucleoprotein</keyword>
<keyword id="KW-0689">Ribosomal protein</keyword>
<keyword id="KW-0694">RNA-binding</keyword>
<keyword id="KW-0699">rRNA-binding</keyword>
<name>RS4_SYNY3</name>
<dbReference type="EMBL" id="BA000022">
    <property type="protein sequence ID" value="BAA10304.1"/>
    <property type="molecule type" value="Genomic_DNA"/>
</dbReference>
<dbReference type="PIR" id="S74386">
    <property type="entry name" value="S74386"/>
</dbReference>
<dbReference type="SMR" id="P48939"/>
<dbReference type="FunCoup" id="P48939">
    <property type="interactions" value="495"/>
</dbReference>
<dbReference type="IntAct" id="P48939">
    <property type="interactions" value="1"/>
</dbReference>
<dbReference type="STRING" id="1148.gene:10499804"/>
<dbReference type="PaxDb" id="1148-1001162"/>
<dbReference type="EnsemblBacteria" id="BAA10304">
    <property type="protein sequence ID" value="BAA10304"/>
    <property type="gene ID" value="BAA10304"/>
</dbReference>
<dbReference type="KEGG" id="syn:slr0469"/>
<dbReference type="eggNOG" id="COG0522">
    <property type="taxonomic scope" value="Bacteria"/>
</dbReference>
<dbReference type="InParanoid" id="P48939"/>
<dbReference type="PhylomeDB" id="P48939"/>
<dbReference type="Proteomes" id="UP000001425">
    <property type="component" value="Chromosome"/>
</dbReference>
<dbReference type="GO" id="GO:0015935">
    <property type="term" value="C:small ribosomal subunit"/>
    <property type="evidence" value="ECO:0000318"/>
    <property type="project" value="GO_Central"/>
</dbReference>
<dbReference type="GO" id="GO:0019843">
    <property type="term" value="F:rRNA binding"/>
    <property type="evidence" value="ECO:0000318"/>
    <property type="project" value="GO_Central"/>
</dbReference>
<dbReference type="GO" id="GO:0003735">
    <property type="term" value="F:structural constituent of ribosome"/>
    <property type="evidence" value="ECO:0000318"/>
    <property type="project" value="GO_Central"/>
</dbReference>
<dbReference type="GO" id="GO:0042274">
    <property type="term" value="P:ribosomal small subunit biogenesis"/>
    <property type="evidence" value="ECO:0000318"/>
    <property type="project" value="GO_Central"/>
</dbReference>
<dbReference type="GO" id="GO:0006412">
    <property type="term" value="P:translation"/>
    <property type="evidence" value="ECO:0007669"/>
    <property type="project" value="UniProtKB-UniRule"/>
</dbReference>
<dbReference type="CDD" id="cd00165">
    <property type="entry name" value="S4"/>
    <property type="match status" value="1"/>
</dbReference>
<dbReference type="FunFam" id="3.10.290.10:FF:000001">
    <property type="entry name" value="30S ribosomal protein S4"/>
    <property type="match status" value="1"/>
</dbReference>
<dbReference type="FunFam" id="1.10.1050.10:FF:000002">
    <property type="entry name" value="30S ribosomal protein S4, chloroplastic"/>
    <property type="match status" value="1"/>
</dbReference>
<dbReference type="Gene3D" id="1.10.1050.10">
    <property type="entry name" value="Ribosomal Protein S4 Delta 41, Chain A, domain 1"/>
    <property type="match status" value="1"/>
</dbReference>
<dbReference type="Gene3D" id="3.10.290.10">
    <property type="entry name" value="RNA-binding S4 domain"/>
    <property type="match status" value="1"/>
</dbReference>
<dbReference type="HAMAP" id="MF_01306_B">
    <property type="entry name" value="Ribosomal_uS4_B"/>
    <property type="match status" value="1"/>
</dbReference>
<dbReference type="InterPro" id="IPR022801">
    <property type="entry name" value="Ribosomal_uS4"/>
</dbReference>
<dbReference type="InterPro" id="IPR005709">
    <property type="entry name" value="Ribosomal_uS4_bac-type"/>
</dbReference>
<dbReference type="InterPro" id="IPR018079">
    <property type="entry name" value="Ribosomal_uS4_CS"/>
</dbReference>
<dbReference type="InterPro" id="IPR001912">
    <property type="entry name" value="Ribosomal_uS4_N"/>
</dbReference>
<dbReference type="InterPro" id="IPR002942">
    <property type="entry name" value="S4_RNA-bd"/>
</dbReference>
<dbReference type="InterPro" id="IPR036986">
    <property type="entry name" value="S4_RNA-bd_sf"/>
</dbReference>
<dbReference type="NCBIfam" id="NF003717">
    <property type="entry name" value="PRK05327.1"/>
    <property type="match status" value="1"/>
</dbReference>
<dbReference type="NCBIfam" id="TIGR01017">
    <property type="entry name" value="rpsD_bact"/>
    <property type="match status" value="1"/>
</dbReference>
<dbReference type="PANTHER" id="PTHR11831">
    <property type="entry name" value="30S 40S RIBOSOMAL PROTEIN"/>
    <property type="match status" value="1"/>
</dbReference>
<dbReference type="PANTHER" id="PTHR11831:SF4">
    <property type="entry name" value="SMALL RIBOSOMAL SUBUNIT PROTEIN US4M"/>
    <property type="match status" value="1"/>
</dbReference>
<dbReference type="Pfam" id="PF00163">
    <property type="entry name" value="Ribosomal_S4"/>
    <property type="match status" value="1"/>
</dbReference>
<dbReference type="Pfam" id="PF01479">
    <property type="entry name" value="S4"/>
    <property type="match status" value="1"/>
</dbReference>
<dbReference type="SMART" id="SM01390">
    <property type="entry name" value="Ribosomal_S4"/>
    <property type="match status" value="1"/>
</dbReference>
<dbReference type="SMART" id="SM00363">
    <property type="entry name" value="S4"/>
    <property type="match status" value="1"/>
</dbReference>
<dbReference type="SUPFAM" id="SSF55174">
    <property type="entry name" value="Alpha-L RNA-binding motif"/>
    <property type="match status" value="1"/>
</dbReference>
<dbReference type="PROSITE" id="PS00632">
    <property type="entry name" value="RIBOSOMAL_S4"/>
    <property type="match status" value="1"/>
</dbReference>
<dbReference type="PROSITE" id="PS50889">
    <property type="entry name" value="S4"/>
    <property type="match status" value="1"/>
</dbReference>
<comment type="function">
    <text evidence="1">One of the primary rRNA binding proteins, it binds directly to 16S rRNA where it nucleates assembly of the body of the 30S subunit.</text>
</comment>
<comment type="function">
    <text evidence="1">With S5 and S12 plays an important role in translational accuracy.</text>
</comment>
<comment type="subunit">
    <text evidence="1">Part of the 30S ribosomal subunit. Contacts protein S5. The interaction surface between S4 and S5 is involved in control of translational fidelity.</text>
</comment>
<comment type="similarity">
    <text evidence="1">Belongs to the universal ribosomal protein uS4 family.</text>
</comment>
<protein>
    <recommendedName>
        <fullName evidence="1">Small ribosomal subunit protein uS4</fullName>
    </recommendedName>
    <alternativeName>
        <fullName evidence="3">30S ribosomal protein S4</fullName>
    </alternativeName>
</protein>
<proteinExistence type="inferred from homology"/>
<accession>P48939</accession>